<accession>Q7YKY5</accession>
<name>MATK_CHACO</name>
<comment type="function">
    <text evidence="1">Usually encoded in the trnK tRNA gene intron. Probably assists in splicing its own and other chloroplast group II introns.</text>
</comment>
<comment type="subcellular location">
    <subcellularLocation>
        <location>Plastid</location>
        <location>Chloroplast</location>
    </subcellularLocation>
</comment>
<comment type="similarity">
    <text evidence="1">Belongs to the intron maturase 2 family. MatK subfamily.</text>
</comment>
<evidence type="ECO:0000255" key="1">
    <source>
        <dbReference type="HAMAP-Rule" id="MF_01390"/>
    </source>
</evidence>
<gene>
    <name evidence="1" type="primary">matK</name>
</gene>
<protein>
    <recommendedName>
        <fullName evidence="1">Maturase K</fullName>
    </recommendedName>
    <alternativeName>
        <fullName evidence="1">Intron maturase</fullName>
    </alternativeName>
</protein>
<reference key="1">
    <citation type="journal article" date="2003" name="Am. J. Bot.">
        <title>Occurrence of matK in a trnK group II intron in charophyte green algae and phylogeny of the Characeae.</title>
        <authorList>
            <person name="Sanders E.R."/>
            <person name="Karol K.G."/>
            <person name="McCourt R.M."/>
        </authorList>
    </citation>
    <scope>NUCLEOTIDE SEQUENCE [GENOMIC DNA]</scope>
    <source>
        <strain>F140C</strain>
    </source>
</reference>
<organism>
    <name type="scientific">Chara connivens</name>
    <name type="common">Convergent stonewort</name>
    <dbReference type="NCBI Taxonomy" id="13779"/>
    <lineage>
        <taxon>Eukaryota</taxon>
        <taxon>Viridiplantae</taxon>
        <taxon>Streptophyta</taxon>
        <taxon>Charophyceae</taxon>
        <taxon>Charales</taxon>
        <taxon>Characeae</taxon>
        <taxon>Chara</taxon>
    </lineage>
</organism>
<geneLocation type="chloroplast"/>
<keyword id="KW-0150">Chloroplast</keyword>
<keyword id="KW-0507">mRNA processing</keyword>
<keyword id="KW-0934">Plastid</keyword>
<keyword id="KW-0694">RNA-binding</keyword>
<keyword id="KW-0819">tRNA processing</keyword>
<sequence length="516" mass="62381">MNLISKKNELKQGFYPLFFLEEFYIRVLIHMNHDHILKIGNIKQSKLIHVNRICHYLLIKRLIRQIRKQSHKYNGISEFPNYETEFYFQYKNRFYNLMIENVFLLILQTIWQHQKTRKNDPCILIHQSIQSAFPFLEKKIIHCIWIIHGNIQLFHTNQQFNFLFLLLYERIRDKSFLNLLKNIFNLKKELLIEGFYCDKFHLIELSMFLRNFYINEFDSFIVYHIVKTWKLAYLLNPSQAIDDFSFIQKNDILLNIKRKQKRLPLLCWLANKSFYSLYGNIHYVRRDLSFLMAIQAGKHISRFWKYNCIKFLQLKLGFPCSLDVLYLKSVFNQDFLFLGYRIVNKLWKKNFKIRAVSWYSPIIFFFKGRRISTKMPVFNLIHRLSVMHLCNLEGYPIHKAAWSVFNDKQIMNIFSNLLRNILLYYSGCSNRSDLGKIQYILEFSCMKTLAFKHKSSIRSTWTQYKKHVSFLSLVKNRHKNGKTSVDLYFLFQKTNKLWLLDLSKIQDSLACFLFID</sequence>
<feature type="chain" id="PRO_0000143327" description="Maturase K">
    <location>
        <begin position="1"/>
        <end position="516"/>
    </location>
</feature>
<dbReference type="EMBL" id="AY170442">
    <property type="protein sequence ID" value="AAO39153.1"/>
    <property type="molecule type" value="Genomic_DNA"/>
</dbReference>
<dbReference type="GO" id="GO:0009507">
    <property type="term" value="C:chloroplast"/>
    <property type="evidence" value="ECO:0007669"/>
    <property type="project" value="UniProtKB-SubCell"/>
</dbReference>
<dbReference type="GO" id="GO:0003723">
    <property type="term" value="F:RNA binding"/>
    <property type="evidence" value="ECO:0007669"/>
    <property type="project" value="UniProtKB-KW"/>
</dbReference>
<dbReference type="GO" id="GO:0006397">
    <property type="term" value="P:mRNA processing"/>
    <property type="evidence" value="ECO:0007669"/>
    <property type="project" value="UniProtKB-KW"/>
</dbReference>
<dbReference type="GO" id="GO:0008380">
    <property type="term" value="P:RNA splicing"/>
    <property type="evidence" value="ECO:0007669"/>
    <property type="project" value="UniProtKB-UniRule"/>
</dbReference>
<dbReference type="GO" id="GO:0008033">
    <property type="term" value="P:tRNA processing"/>
    <property type="evidence" value="ECO:0007669"/>
    <property type="project" value="UniProtKB-KW"/>
</dbReference>
<dbReference type="HAMAP" id="MF_01390">
    <property type="entry name" value="MatK"/>
    <property type="match status" value="1"/>
</dbReference>
<dbReference type="InterPro" id="IPR024937">
    <property type="entry name" value="Domain_X"/>
</dbReference>
<dbReference type="InterPro" id="IPR002866">
    <property type="entry name" value="Maturase_MatK"/>
</dbReference>
<dbReference type="InterPro" id="IPR024942">
    <property type="entry name" value="Maturase_MatK_N"/>
</dbReference>
<dbReference type="PANTHER" id="PTHR34811">
    <property type="entry name" value="MATURASE K"/>
    <property type="match status" value="1"/>
</dbReference>
<dbReference type="PANTHER" id="PTHR34811:SF1">
    <property type="entry name" value="MATURASE K"/>
    <property type="match status" value="1"/>
</dbReference>
<dbReference type="Pfam" id="PF01348">
    <property type="entry name" value="Intron_maturas2"/>
    <property type="match status" value="1"/>
</dbReference>
<dbReference type="Pfam" id="PF01824">
    <property type="entry name" value="MatK_N"/>
    <property type="match status" value="1"/>
</dbReference>
<proteinExistence type="inferred from homology"/>